<gene>
    <name type="primary">dtl-b</name>
    <name type="synonym">cdt2-b</name>
</gene>
<organism>
    <name type="scientific">Xenopus laevis</name>
    <name type="common">African clawed frog</name>
    <dbReference type="NCBI Taxonomy" id="8355"/>
    <lineage>
        <taxon>Eukaryota</taxon>
        <taxon>Metazoa</taxon>
        <taxon>Chordata</taxon>
        <taxon>Craniata</taxon>
        <taxon>Vertebrata</taxon>
        <taxon>Euteleostomi</taxon>
        <taxon>Amphibia</taxon>
        <taxon>Batrachia</taxon>
        <taxon>Anura</taxon>
        <taxon>Pipoidea</taxon>
        <taxon>Pipidae</taxon>
        <taxon>Xenopodinae</taxon>
        <taxon>Xenopus</taxon>
        <taxon>Xenopus</taxon>
    </lineage>
</organism>
<comment type="function">
    <text evidence="3 6">Substrate-specific adapter of a DCX (DDB1-CUL4-X-box) E3 ubiquitin-protein ligase complex required for cell cycle control, DNA damage response and translesion DNA synthesis. The DCX(DTL) complex, also named CRL4(CDT2) complex, mediates the polyubiquitination and subsequent degradation of CDT1, CDKN1A/p21(CIP1), KMT5A and SDE2. CDT1 degradation in response to DNA damage is necessary to ensure proper cell cycle regulation of DNA replication. CDKN1A/p21(CIP1) degradation during S phase or following UV irradiation is essential to control replication licensing. KMT5A degradation is also important for a proper regulation of mechanisms such as TGF-beta signaling, cell cycle progression, DNA repair and cell migration. Most substrates require their interaction with PCNA for their polyubiquitination: substrates interact with PCNA via their PIP-box, and those containing the 'K+4' motif in the PIP box, recruit the DCX(DTL) complex, leading to their degradation. In undamaged proliferating cells, the DCX(DTL) complex also promotes the 'Lys-164' monoubiquitination of PCNA, thereby being involved in PCNA-dependent translesion DNA synthesis. May play a role in the regulation of the circadian clock (By similarity).</text>
</comment>
<comment type="pathway">
    <text>Protein modification; protein ubiquitination.</text>
</comment>
<comment type="subunit">
    <text evidence="2">Component of the DCX(DTL) E3 ubiquitin ligase complex, at least composed of cul4 (cul4a or cul4b), ddb1, dtl/cdt2 and rbx1.</text>
</comment>
<comment type="subcellular location">
    <subcellularLocation>
        <location evidence="3">Nucleus</location>
    </subcellularLocation>
    <subcellularLocation>
        <location evidence="1">Cytoplasm</location>
        <location evidence="1">Cytoskeleton</location>
        <location evidence="1">Microtubule organizing center</location>
        <location evidence="1">Centrosome</location>
    </subcellularLocation>
    <subcellularLocation>
        <location evidence="1">Chromosome</location>
    </subcellularLocation>
</comment>
<comment type="similarity">
    <text evidence="7">Belongs to the WD repeat cdt2 family.</text>
</comment>
<dbReference type="EMBL" id="BC073015">
    <property type="protein sequence ID" value="AAH73015.1"/>
    <property type="molecule type" value="mRNA"/>
</dbReference>
<dbReference type="RefSeq" id="NP_001085609.1">
    <property type="nucleotide sequence ID" value="NM_001092140.1"/>
</dbReference>
<dbReference type="SMR" id="Q6GPU3"/>
<dbReference type="BioGRID" id="102198">
    <property type="interactions" value="4"/>
</dbReference>
<dbReference type="DNASU" id="444035"/>
<dbReference type="GeneID" id="444035"/>
<dbReference type="KEGG" id="xla:444035"/>
<dbReference type="AGR" id="Xenbase:XB-GENE-985629"/>
<dbReference type="CTD" id="444035"/>
<dbReference type="Xenbase" id="XB-GENE-985629">
    <property type="gene designation" value="dtl.L"/>
</dbReference>
<dbReference type="OrthoDB" id="2096344at2759"/>
<dbReference type="UniPathway" id="UPA00143"/>
<dbReference type="Proteomes" id="UP000186698">
    <property type="component" value="Chromosome 5L"/>
</dbReference>
<dbReference type="Bgee" id="444035">
    <property type="expression patterns" value="Expressed in blastula and 16 other cell types or tissues"/>
</dbReference>
<dbReference type="GO" id="GO:0005813">
    <property type="term" value="C:centrosome"/>
    <property type="evidence" value="ECO:0000250"/>
    <property type="project" value="UniProtKB"/>
</dbReference>
<dbReference type="GO" id="GO:0005694">
    <property type="term" value="C:chromosome"/>
    <property type="evidence" value="ECO:0007669"/>
    <property type="project" value="UniProtKB-SubCell"/>
</dbReference>
<dbReference type="GO" id="GO:0031464">
    <property type="term" value="C:Cul4A-RING E3 ubiquitin ligase complex"/>
    <property type="evidence" value="ECO:0000250"/>
    <property type="project" value="UniProtKB"/>
</dbReference>
<dbReference type="GO" id="GO:0031465">
    <property type="term" value="C:Cul4B-RING E3 ubiquitin ligase complex"/>
    <property type="evidence" value="ECO:0000250"/>
    <property type="project" value="UniProtKB"/>
</dbReference>
<dbReference type="GO" id="GO:0005737">
    <property type="term" value="C:cytoplasm"/>
    <property type="evidence" value="ECO:0007669"/>
    <property type="project" value="UniProtKB-KW"/>
</dbReference>
<dbReference type="GO" id="GO:0005634">
    <property type="term" value="C:nucleus"/>
    <property type="evidence" value="ECO:0000250"/>
    <property type="project" value="UniProtKB"/>
</dbReference>
<dbReference type="GO" id="GO:0030674">
    <property type="term" value="F:protein-macromolecule adaptor activity"/>
    <property type="evidence" value="ECO:0000318"/>
    <property type="project" value="GO_Central"/>
</dbReference>
<dbReference type="GO" id="GO:0006974">
    <property type="term" value="P:DNA damage response"/>
    <property type="evidence" value="ECO:0000250"/>
    <property type="project" value="UniProtKB"/>
</dbReference>
<dbReference type="GO" id="GO:0006260">
    <property type="term" value="P:DNA replication"/>
    <property type="evidence" value="ECO:0007669"/>
    <property type="project" value="UniProtKB-KW"/>
</dbReference>
<dbReference type="GO" id="GO:0007095">
    <property type="term" value="P:mitotic G2 DNA damage checkpoint signaling"/>
    <property type="evidence" value="ECO:0000250"/>
    <property type="project" value="UniProtKB"/>
</dbReference>
<dbReference type="GO" id="GO:0043161">
    <property type="term" value="P:proteasome-mediated ubiquitin-dependent protein catabolic process"/>
    <property type="evidence" value="ECO:0000318"/>
    <property type="project" value="GO_Central"/>
</dbReference>
<dbReference type="GO" id="GO:0006513">
    <property type="term" value="P:protein monoubiquitination"/>
    <property type="evidence" value="ECO:0000250"/>
    <property type="project" value="UniProtKB"/>
</dbReference>
<dbReference type="GO" id="GO:0000209">
    <property type="term" value="P:protein polyubiquitination"/>
    <property type="evidence" value="ECO:0000250"/>
    <property type="project" value="UniProtKB"/>
</dbReference>
<dbReference type="GO" id="GO:0051726">
    <property type="term" value="P:regulation of cell cycle"/>
    <property type="evidence" value="ECO:0000250"/>
    <property type="project" value="UniProtKB"/>
</dbReference>
<dbReference type="GO" id="GO:0009411">
    <property type="term" value="P:response to UV"/>
    <property type="evidence" value="ECO:0000250"/>
    <property type="project" value="UniProtKB"/>
</dbReference>
<dbReference type="GO" id="GO:0048511">
    <property type="term" value="P:rhythmic process"/>
    <property type="evidence" value="ECO:0007669"/>
    <property type="project" value="UniProtKB-KW"/>
</dbReference>
<dbReference type="GO" id="GO:0019985">
    <property type="term" value="P:translesion synthesis"/>
    <property type="evidence" value="ECO:0000250"/>
    <property type="project" value="UniProtKB"/>
</dbReference>
<dbReference type="GO" id="GO:0006511">
    <property type="term" value="P:ubiquitin-dependent protein catabolic process"/>
    <property type="evidence" value="ECO:0000250"/>
    <property type="project" value="UniProtKB"/>
</dbReference>
<dbReference type="CDD" id="cd00200">
    <property type="entry name" value="WD40"/>
    <property type="match status" value="1"/>
</dbReference>
<dbReference type="FunFam" id="2.130.10.10:FF:000447">
    <property type="entry name" value="Denticleless protein homolog B"/>
    <property type="match status" value="1"/>
</dbReference>
<dbReference type="FunFam" id="2.130.10.10:FF:000171">
    <property type="entry name" value="denticleless protein homolog isoform X1"/>
    <property type="match status" value="1"/>
</dbReference>
<dbReference type="Gene3D" id="2.130.10.10">
    <property type="entry name" value="YVTN repeat-like/Quinoprotein amine dehydrogenase"/>
    <property type="match status" value="2"/>
</dbReference>
<dbReference type="InterPro" id="IPR020472">
    <property type="entry name" value="G-protein_beta_WD-40_rep"/>
</dbReference>
<dbReference type="InterPro" id="IPR051865">
    <property type="entry name" value="WD-repeat_CDT2_adapter"/>
</dbReference>
<dbReference type="InterPro" id="IPR015943">
    <property type="entry name" value="WD40/YVTN_repeat-like_dom_sf"/>
</dbReference>
<dbReference type="InterPro" id="IPR019775">
    <property type="entry name" value="WD40_repeat_CS"/>
</dbReference>
<dbReference type="InterPro" id="IPR036322">
    <property type="entry name" value="WD40_repeat_dom_sf"/>
</dbReference>
<dbReference type="InterPro" id="IPR001680">
    <property type="entry name" value="WD40_rpt"/>
</dbReference>
<dbReference type="PANTHER" id="PTHR22852:SF0">
    <property type="entry name" value="DENTICLELESS PROTEIN HOMOLOG"/>
    <property type="match status" value="1"/>
</dbReference>
<dbReference type="PANTHER" id="PTHR22852">
    <property type="entry name" value="LETHAL 2 DENTICLELESS PROTEIN RETINOIC ACID-REGULATED NUCLEAR MATRIX-ASSOCIATED PROTEIN"/>
    <property type="match status" value="1"/>
</dbReference>
<dbReference type="Pfam" id="PF00400">
    <property type="entry name" value="WD40"/>
    <property type="match status" value="4"/>
</dbReference>
<dbReference type="PRINTS" id="PR00320">
    <property type="entry name" value="GPROTEINBRPT"/>
</dbReference>
<dbReference type="SMART" id="SM00320">
    <property type="entry name" value="WD40"/>
    <property type="match status" value="6"/>
</dbReference>
<dbReference type="SUPFAM" id="SSF50978">
    <property type="entry name" value="WD40 repeat-like"/>
    <property type="match status" value="1"/>
</dbReference>
<dbReference type="PROSITE" id="PS00678">
    <property type="entry name" value="WD_REPEATS_1"/>
    <property type="match status" value="2"/>
</dbReference>
<dbReference type="PROSITE" id="PS50082">
    <property type="entry name" value="WD_REPEATS_2"/>
    <property type="match status" value="5"/>
</dbReference>
<dbReference type="PROSITE" id="PS50294">
    <property type="entry name" value="WD_REPEATS_REGION"/>
    <property type="match status" value="1"/>
</dbReference>
<sequence>MLFRSVVNKPRFGCGHNGAPFTSPLQSLLQCYQCVKQDEHISYGDLGRAVPPFGCAFSTVPGMSHVLAVANEEGIVRLYDTECGDMQRLVVKEFMAHTNAVFDIAWVPGEHKLVTASGDQTAKLWDVKAGELIGECKGHQCSLKSVAFSKFERAVFSTGGRDGNIMVWDTRCNKKDGFYRQVNQITGAHNAIDKQTPSKVKKRKPSIRGLAPSVDSQQSVTVVIFQDEYTVISAGAVDGVVKIWDLRKNYSTYRQDPVPVKLFPYPGNSTRKLGYSSLVLDPTGTNLFASCTDDNVYMFNATGLKTDPVSVFRGHQNSTFYIKASVSPDGQFLLSGSSDHSAYIWQVSDPLAAPINLIGHCQEVTSVAWCQSDFTKIATCSDDNTVRIWRLNRSSEDSSESNKTDYVGWACKKKFEPSSMAAILCTPGKPSMIPSSSLMSSPTPATCAPSNTGDLPLPSSTPLSALLPTSKLQTPKRINNGGLGASPKQMSSSKISIKDWVTRTPKSSKGTDSKTPSPRKAFTPVEQYPIVSNARVQLPYEKRAKRRLETSSEDVEHVCLDNCCVMELEPRLKKSKLDLCSLNERDCRDDKCLRLSDLSKEFDQELSPSPSTSLHMNATDNPPTLSPLSEMKSDFVDKENSSPEKNWLSALGHKFKSDNSSPQFKSSSSPSSRNSTSKKHQPRNAPNSPVSVPTTPGSMRKICTYFFKKSE</sequence>
<feature type="chain" id="PRO_0000396626" description="Denticleless protein homolog B">
    <location>
        <begin position="1"/>
        <end position="711"/>
    </location>
</feature>
<feature type="repeat" description="WD 1">
    <location>
        <begin position="47"/>
        <end position="89"/>
    </location>
</feature>
<feature type="repeat" description="WD 2">
    <location>
        <begin position="96"/>
        <end position="135"/>
    </location>
</feature>
<feature type="repeat" description="WD 3">
    <location>
        <begin position="138"/>
        <end position="178"/>
    </location>
</feature>
<feature type="repeat" description="WD 4">
    <location>
        <begin position="215"/>
        <end position="254"/>
    </location>
</feature>
<feature type="repeat" description="WD 5">
    <location>
        <begin position="270"/>
        <end position="309"/>
    </location>
</feature>
<feature type="repeat" description="WD 6">
    <location>
        <begin position="314"/>
        <end position="355"/>
    </location>
</feature>
<feature type="repeat" description="WD 7">
    <location>
        <begin position="359"/>
        <end position="398"/>
    </location>
</feature>
<feature type="region of interest" description="Disordered" evidence="5">
    <location>
        <begin position="473"/>
        <end position="524"/>
    </location>
</feature>
<feature type="region of interest" description="Disordered" evidence="5">
    <location>
        <begin position="601"/>
        <end position="698"/>
    </location>
</feature>
<feature type="short sequence motif" description="DDB1-binding motif" evidence="1">
    <location>
        <begin position="168"/>
        <end position="171"/>
    </location>
</feature>
<feature type="short sequence motif" description="Nuclear localization signal" evidence="4">
    <location>
        <begin position="197"/>
        <end position="204"/>
    </location>
</feature>
<feature type="short sequence motif" description="DDB1-binding motif" evidence="1">
    <location>
        <begin position="244"/>
        <end position="247"/>
    </location>
</feature>
<feature type="compositionally biased region" description="Polar residues" evidence="5">
    <location>
        <begin position="504"/>
        <end position="516"/>
    </location>
</feature>
<feature type="compositionally biased region" description="Polar residues" evidence="5">
    <location>
        <begin position="606"/>
        <end position="627"/>
    </location>
</feature>
<feature type="compositionally biased region" description="Basic and acidic residues" evidence="5">
    <location>
        <begin position="631"/>
        <end position="642"/>
    </location>
</feature>
<feature type="compositionally biased region" description="Low complexity" evidence="5">
    <location>
        <begin position="658"/>
        <end position="675"/>
    </location>
</feature>
<feature type="compositionally biased region" description="Polar residues" evidence="5">
    <location>
        <begin position="684"/>
        <end position="697"/>
    </location>
</feature>
<reference key="1">
    <citation type="submission" date="2004-06" db="EMBL/GenBank/DDBJ databases">
        <authorList>
            <consortium name="NIH - Xenopus Gene Collection (XGC) project"/>
        </authorList>
    </citation>
    <scope>NUCLEOTIDE SEQUENCE [LARGE SCALE MRNA]</scope>
    <source>
        <tissue>Ovary</tissue>
    </source>
</reference>
<reference key="2">
    <citation type="journal article" date="2009" name="Mol. Cell">
        <title>Docking of a specialized PIP Box onto chromatin-bound PCNA creates a degron for the ubiquitin ligase CRL4Cdt2.</title>
        <authorList>
            <person name="Havens C.G."/>
            <person name="Walter J.C."/>
        </authorList>
    </citation>
    <scope>FUNCTION</scope>
</reference>
<keyword id="KW-0090">Biological rhythms</keyword>
<keyword id="KW-0158">Chromosome</keyword>
<keyword id="KW-0963">Cytoplasm</keyword>
<keyword id="KW-0206">Cytoskeleton</keyword>
<keyword id="KW-0227">DNA damage</keyword>
<keyword id="KW-0235">DNA replication</keyword>
<keyword id="KW-0539">Nucleus</keyword>
<keyword id="KW-1185">Reference proteome</keyword>
<keyword id="KW-0677">Repeat</keyword>
<keyword id="KW-0833">Ubl conjugation pathway</keyword>
<keyword id="KW-0853">WD repeat</keyword>
<name>DTLB_XENLA</name>
<evidence type="ECO:0000250" key="1"/>
<evidence type="ECO:0000250" key="2">
    <source>
        <dbReference type="UniProtKB" id="Q6P1W0"/>
    </source>
</evidence>
<evidence type="ECO:0000250" key="3">
    <source>
        <dbReference type="UniProtKB" id="Q9NZJ0"/>
    </source>
</evidence>
<evidence type="ECO:0000255" key="4"/>
<evidence type="ECO:0000256" key="5">
    <source>
        <dbReference type="SAM" id="MobiDB-lite"/>
    </source>
</evidence>
<evidence type="ECO:0000269" key="6">
    <source>
    </source>
</evidence>
<evidence type="ECO:0000305" key="7"/>
<protein>
    <recommendedName>
        <fullName>Denticleless protein homolog B</fullName>
    </recommendedName>
</protein>
<proteinExistence type="evidence at transcript level"/>
<accession>Q6GPU3</accession>